<feature type="signal peptide" evidence="2">
    <location>
        <begin position="1"/>
        <end position="18"/>
    </location>
</feature>
<feature type="chain" id="PRO_0000379771" description="Defensin-like protein 316">
    <location>
        <begin position="19"/>
        <end position="100"/>
    </location>
</feature>
<feature type="disulfide bond" evidence="1">
    <location>
        <begin position="21"/>
        <end position="84"/>
    </location>
</feature>
<feature type="disulfide bond" evidence="1">
    <location>
        <begin position="43"/>
        <end position="64"/>
    </location>
</feature>
<feature type="disulfide bond" evidence="1">
    <location>
        <begin position="53"/>
        <end position="76"/>
    </location>
</feature>
<comment type="subcellular location">
    <subcellularLocation>
        <location evidence="1">Secreted</location>
    </subcellularLocation>
</comment>
<comment type="similarity">
    <text evidence="3">Belongs to the DEFL family.</text>
</comment>
<comment type="caution">
    <text evidence="3">Could be the product of a pseudogene. Lacks 1 of the 4 disulfide bonds, which are conserved features of the family.</text>
</comment>
<organism>
    <name type="scientific">Arabidopsis thaliana</name>
    <name type="common">Mouse-ear cress</name>
    <dbReference type="NCBI Taxonomy" id="3702"/>
    <lineage>
        <taxon>Eukaryota</taxon>
        <taxon>Viridiplantae</taxon>
        <taxon>Streptophyta</taxon>
        <taxon>Embryophyta</taxon>
        <taxon>Tracheophyta</taxon>
        <taxon>Spermatophyta</taxon>
        <taxon>Magnoliopsida</taxon>
        <taxon>eudicotyledons</taxon>
        <taxon>Gunneridae</taxon>
        <taxon>Pentapetalae</taxon>
        <taxon>rosids</taxon>
        <taxon>malvids</taxon>
        <taxon>Brassicales</taxon>
        <taxon>Brassicaceae</taxon>
        <taxon>Camelineae</taxon>
        <taxon>Arabidopsis</taxon>
    </lineage>
</organism>
<keyword id="KW-0929">Antimicrobial</keyword>
<keyword id="KW-1015">Disulfide bond</keyword>
<keyword id="KW-0295">Fungicide</keyword>
<keyword id="KW-0611">Plant defense</keyword>
<keyword id="KW-1185">Reference proteome</keyword>
<keyword id="KW-0964">Secreted</keyword>
<keyword id="KW-0732">Signal</keyword>
<protein>
    <recommendedName>
        <fullName>Defensin-like protein 316</fullName>
    </recommendedName>
</protein>
<proteinExistence type="uncertain"/>
<dbReference type="EMBL" id="AC074360">
    <property type="status" value="NOT_ANNOTATED_CDS"/>
    <property type="molecule type" value="Genomic_DNA"/>
</dbReference>
<dbReference type="EMBL" id="AC079041">
    <property type="status" value="NOT_ANNOTATED_CDS"/>
    <property type="molecule type" value="Genomic_DNA"/>
</dbReference>
<dbReference type="EMBL" id="CP002684">
    <property type="protein sequence ID" value="AEE31391.1"/>
    <property type="molecule type" value="Genomic_DNA"/>
</dbReference>
<dbReference type="RefSeq" id="NP_001031123.1">
    <property type="nucleotide sequence ID" value="NM_001036046.2"/>
</dbReference>
<dbReference type="PaxDb" id="3702-AT1G31772.1"/>
<dbReference type="EnsemblPlants" id="AT1G31772.1">
    <property type="protein sequence ID" value="AT1G31772.1"/>
    <property type="gene ID" value="AT1G31772"/>
</dbReference>
<dbReference type="GeneID" id="3766871"/>
<dbReference type="Gramene" id="AT1G31772.1">
    <property type="protein sequence ID" value="AT1G31772.1"/>
    <property type="gene ID" value="AT1G31772"/>
</dbReference>
<dbReference type="KEGG" id="ath:AT1G31772"/>
<dbReference type="Araport" id="AT1G31772"/>
<dbReference type="TAIR" id="AT1G31772"/>
<dbReference type="HOGENOM" id="CLU_2309932_0_0_1"/>
<dbReference type="InParanoid" id="Q2V4J8"/>
<dbReference type="Proteomes" id="UP000006548">
    <property type="component" value="Chromosome 1"/>
</dbReference>
<dbReference type="ExpressionAtlas" id="Q2V4J8">
    <property type="expression patterns" value="baseline and differential"/>
</dbReference>
<dbReference type="GO" id="GO:0005576">
    <property type="term" value="C:extracellular region"/>
    <property type="evidence" value="ECO:0007669"/>
    <property type="project" value="UniProtKB-SubCell"/>
</dbReference>
<dbReference type="GO" id="GO:0050832">
    <property type="term" value="P:defense response to fungus"/>
    <property type="evidence" value="ECO:0007669"/>
    <property type="project" value="UniProtKB-KW"/>
</dbReference>
<dbReference type="GO" id="GO:0031640">
    <property type="term" value="P:killing of cells of another organism"/>
    <property type="evidence" value="ECO:0007669"/>
    <property type="project" value="UniProtKB-KW"/>
</dbReference>
<accession>Q2V4J8</accession>
<sequence length="100" mass="11554">MASHIICYIFCIIKLSCAHVCLMSFGSSYRVGVHITHEKVAACPRQNQRLYSCDSLRILYHYSCLTTRDLLYICDCSDFENIICLIRLLLNLDFVEVKLV</sequence>
<gene>
    <name type="ordered locus">At1g31772</name>
    <name type="ORF">F27M3</name>
    <name type="ORF">F5M6</name>
</gene>
<name>DF316_ARATH</name>
<reference key="1">
    <citation type="journal article" date="2000" name="Nature">
        <title>Sequence and analysis of chromosome 1 of the plant Arabidopsis thaliana.</title>
        <authorList>
            <person name="Theologis A."/>
            <person name="Ecker J.R."/>
            <person name="Palm C.J."/>
            <person name="Federspiel N.A."/>
            <person name="Kaul S."/>
            <person name="White O."/>
            <person name="Alonso J."/>
            <person name="Altafi H."/>
            <person name="Araujo R."/>
            <person name="Bowman C.L."/>
            <person name="Brooks S.Y."/>
            <person name="Buehler E."/>
            <person name="Chan A."/>
            <person name="Chao Q."/>
            <person name="Chen H."/>
            <person name="Cheuk R.F."/>
            <person name="Chin C.W."/>
            <person name="Chung M.K."/>
            <person name="Conn L."/>
            <person name="Conway A.B."/>
            <person name="Conway A.R."/>
            <person name="Creasy T.H."/>
            <person name="Dewar K."/>
            <person name="Dunn P."/>
            <person name="Etgu P."/>
            <person name="Feldblyum T.V."/>
            <person name="Feng J.-D."/>
            <person name="Fong B."/>
            <person name="Fujii C.Y."/>
            <person name="Gill J.E."/>
            <person name="Goldsmith A.D."/>
            <person name="Haas B."/>
            <person name="Hansen N.F."/>
            <person name="Hughes B."/>
            <person name="Huizar L."/>
            <person name="Hunter J.L."/>
            <person name="Jenkins J."/>
            <person name="Johnson-Hopson C."/>
            <person name="Khan S."/>
            <person name="Khaykin E."/>
            <person name="Kim C.J."/>
            <person name="Koo H.L."/>
            <person name="Kremenetskaia I."/>
            <person name="Kurtz D.B."/>
            <person name="Kwan A."/>
            <person name="Lam B."/>
            <person name="Langin-Hooper S."/>
            <person name="Lee A."/>
            <person name="Lee J.M."/>
            <person name="Lenz C.A."/>
            <person name="Li J.H."/>
            <person name="Li Y.-P."/>
            <person name="Lin X."/>
            <person name="Liu S.X."/>
            <person name="Liu Z.A."/>
            <person name="Luros J.S."/>
            <person name="Maiti R."/>
            <person name="Marziali A."/>
            <person name="Militscher J."/>
            <person name="Miranda M."/>
            <person name="Nguyen M."/>
            <person name="Nierman W.C."/>
            <person name="Osborne B.I."/>
            <person name="Pai G."/>
            <person name="Peterson J."/>
            <person name="Pham P.K."/>
            <person name="Rizzo M."/>
            <person name="Rooney T."/>
            <person name="Rowley D."/>
            <person name="Sakano H."/>
            <person name="Salzberg S.L."/>
            <person name="Schwartz J.R."/>
            <person name="Shinn P."/>
            <person name="Southwick A.M."/>
            <person name="Sun H."/>
            <person name="Tallon L.J."/>
            <person name="Tambunga G."/>
            <person name="Toriumi M.J."/>
            <person name="Town C.D."/>
            <person name="Utterback T."/>
            <person name="Van Aken S."/>
            <person name="Vaysberg M."/>
            <person name="Vysotskaia V.S."/>
            <person name="Walker M."/>
            <person name="Wu D."/>
            <person name="Yu G."/>
            <person name="Fraser C.M."/>
            <person name="Venter J.C."/>
            <person name="Davis R.W."/>
        </authorList>
    </citation>
    <scope>NUCLEOTIDE SEQUENCE [LARGE SCALE GENOMIC DNA]</scope>
    <source>
        <strain>cv. Columbia</strain>
    </source>
</reference>
<reference key="2">
    <citation type="journal article" date="2017" name="Plant J.">
        <title>Araport11: a complete reannotation of the Arabidopsis thaliana reference genome.</title>
        <authorList>
            <person name="Cheng C.Y."/>
            <person name="Krishnakumar V."/>
            <person name="Chan A.P."/>
            <person name="Thibaud-Nissen F."/>
            <person name="Schobel S."/>
            <person name="Town C.D."/>
        </authorList>
    </citation>
    <scope>GENOME REANNOTATION</scope>
    <source>
        <strain>cv. Columbia</strain>
    </source>
</reference>
<reference key="3">
    <citation type="journal article" date="2005" name="Plant Physiol.">
        <title>Genome organization of more than 300 defensin-like genes in Arabidopsis.</title>
        <authorList>
            <person name="Silverstein K.A.T."/>
            <person name="Graham M.A."/>
            <person name="Paape T.D."/>
            <person name="VandenBosch K.A."/>
        </authorList>
    </citation>
    <scope>GENE FAMILY</scope>
</reference>
<evidence type="ECO:0000250" key="1"/>
<evidence type="ECO:0000255" key="2"/>
<evidence type="ECO:0000305" key="3"/>